<accession>Q8DW14</accession>
<evidence type="ECO:0000255" key="1">
    <source>
        <dbReference type="HAMAP-Rule" id="MF_00011"/>
    </source>
</evidence>
<proteinExistence type="inferred from homology"/>
<gene>
    <name evidence="1" type="primary">purA</name>
    <name type="ordered locus">SMU_268</name>
</gene>
<name>PURA_STRMU</name>
<comment type="function">
    <text evidence="1">Plays an important role in the de novo pathway of purine nucleotide biosynthesis. Catalyzes the first committed step in the biosynthesis of AMP from IMP.</text>
</comment>
<comment type="catalytic activity">
    <reaction evidence="1">
        <text>IMP + L-aspartate + GTP = N(6)-(1,2-dicarboxyethyl)-AMP + GDP + phosphate + 2 H(+)</text>
        <dbReference type="Rhea" id="RHEA:15753"/>
        <dbReference type="ChEBI" id="CHEBI:15378"/>
        <dbReference type="ChEBI" id="CHEBI:29991"/>
        <dbReference type="ChEBI" id="CHEBI:37565"/>
        <dbReference type="ChEBI" id="CHEBI:43474"/>
        <dbReference type="ChEBI" id="CHEBI:57567"/>
        <dbReference type="ChEBI" id="CHEBI:58053"/>
        <dbReference type="ChEBI" id="CHEBI:58189"/>
        <dbReference type="EC" id="6.3.4.4"/>
    </reaction>
</comment>
<comment type="cofactor">
    <cofactor evidence="1">
        <name>Mg(2+)</name>
        <dbReference type="ChEBI" id="CHEBI:18420"/>
    </cofactor>
    <text evidence="1">Binds 1 Mg(2+) ion per subunit.</text>
</comment>
<comment type="pathway">
    <text evidence="1">Purine metabolism; AMP biosynthesis via de novo pathway; AMP from IMP: step 1/2.</text>
</comment>
<comment type="subunit">
    <text evidence="1">Homodimer.</text>
</comment>
<comment type="subcellular location">
    <subcellularLocation>
        <location evidence="1">Cytoplasm</location>
    </subcellularLocation>
</comment>
<comment type="similarity">
    <text evidence="1">Belongs to the adenylosuccinate synthetase family.</text>
</comment>
<dbReference type="EC" id="6.3.4.4" evidence="1"/>
<dbReference type="EMBL" id="AE014133">
    <property type="protein sequence ID" value="AAN58036.1"/>
    <property type="molecule type" value="Genomic_DNA"/>
</dbReference>
<dbReference type="RefSeq" id="NP_720730.1">
    <property type="nucleotide sequence ID" value="NC_004350.2"/>
</dbReference>
<dbReference type="RefSeq" id="WP_002262728.1">
    <property type="nucleotide sequence ID" value="NC_004350.2"/>
</dbReference>
<dbReference type="SMR" id="Q8DW14"/>
<dbReference type="STRING" id="210007.SMU_268"/>
<dbReference type="KEGG" id="smu:SMU_268"/>
<dbReference type="PATRIC" id="fig|210007.7.peg.234"/>
<dbReference type="eggNOG" id="COG0104">
    <property type="taxonomic scope" value="Bacteria"/>
</dbReference>
<dbReference type="HOGENOM" id="CLU_029848_0_0_9"/>
<dbReference type="OrthoDB" id="9807553at2"/>
<dbReference type="PhylomeDB" id="Q8DW14"/>
<dbReference type="UniPathway" id="UPA00075">
    <property type="reaction ID" value="UER00335"/>
</dbReference>
<dbReference type="Proteomes" id="UP000002512">
    <property type="component" value="Chromosome"/>
</dbReference>
<dbReference type="GO" id="GO:0005737">
    <property type="term" value="C:cytoplasm"/>
    <property type="evidence" value="ECO:0007669"/>
    <property type="project" value="UniProtKB-SubCell"/>
</dbReference>
<dbReference type="GO" id="GO:0004019">
    <property type="term" value="F:adenylosuccinate synthase activity"/>
    <property type="evidence" value="ECO:0007669"/>
    <property type="project" value="UniProtKB-UniRule"/>
</dbReference>
<dbReference type="GO" id="GO:0005525">
    <property type="term" value="F:GTP binding"/>
    <property type="evidence" value="ECO:0007669"/>
    <property type="project" value="UniProtKB-UniRule"/>
</dbReference>
<dbReference type="GO" id="GO:0000287">
    <property type="term" value="F:magnesium ion binding"/>
    <property type="evidence" value="ECO:0007669"/>
    <property type="project" value="UniProtKB-UniRule"/>
</dbReference>
<dbReference type="GO" id="GO:0044208">
    <property type="term" value="P:'de novo' AMP biosynthetic process"/>
    <property type="evidence" value="ECO:0007669"/>
    <property type="project" value="UniProtKB-UniRule"/>
</dbReference>
<dbReference type="GO" id="GO:0046040">
    <property type="term" value="P:IMP metabolic process"/>
    <property type="evidence" value="ECO:0007669"/>
    <property type="project" value="TreeGrafter"/>
</dbReference>
<dbReference type="CDD" id="cd03108">
    <property type="entry name" value="AdSS"/>
    <property type="match status" value="1"/>
</dbReference>
<dbReference type="FunFam" id="1.10.300.10:FF:000001">
    <property type="entry name" value="Adenylosuccinate synthetase"/>
    <property type="match status" value="1"/>
</dbReference>
<dbReference type="FunFam" id="3.90.170.10:FF:000001">
    <property type="entry name" value="Adenylosuccinate synthetase"/>
    <property type="match status" value="1"/>
</dbReference>
<dbReference type="Gene3D" id="3.40.440.10">
    <property type="entry name" value="Adenylosuccinate Synthetase, subunit A, domain 1"/>
    <property type="match status" value="1"/>
</dbReference>
<dbReference type="Gene3D" id="1.10.300.10">
    <property type="entry name" value="Adenylosuccinate Synthetase, subunit A, domain 2"/>
    <property type="match status" value="1"/>
</dbReference>
<dbReference type="Gene3D" id="3.90.170.10">
    <property type="entry name" value="Adenylosuccinate Synthetase, subunit A, domain 3"/>
    <property type="match status" value="1"/>
</dbReference>
<dbReference type="HAMAP" id="MF_00011">
    <property type="entry name" value="Adenylosucc_synth"/>
    <property type="match status" value="1"/>
</dbReference>
<dbReference type="InterPro" id="IPR018220">
    <property type="entry name" value="Adenylosuccin_syn_GTP-bd"/>
</dbReference>
<dbReference type="InterPro" id="IPR033128">
    <property type="entry name" value="Adenylosuccin_syn_Lys_AS"/>
</dbReference>
<dbReference type="InterPro" id="IPR042109">
    <property type="entry name" value="Adenylosuccinate_synth_dom1"/>
</dbReference>
<dbReference type="InterPro" id="IPR042110">
    <property type="entry name" value="Adenylosuccinate_synth_dom2"/>
</dbReference>
<dbReference type="InterPro" id="IPR042111">
    <property type="entry name" value="Adenylosuccinate_synth_dom3"/>
</dbReference>
<dbReference type="InterPro" id="IPR001114">
    <property type="entry name" value="Adenylosuccinate_synthetase"/>
</dbReference>
<dbReference type="InterPro" id="IPR027417">
    <property type="entry name" value="P-loop_NTPase"/>
</dbReference>
<dbReference type="NCBIfam" id="NF002223">
    <property type="entry name" value="PRK01117.1"/>
    <property type="match status" value="1"/>
</dbReference>
<dbReference type="NCBIfam" id="TIGR00184">
    <property type="entry name" value="purA"/>
    <property type="match status" value="1"/>
</dbReference>
<dbReference type="PANTHER" id="PTHR11846">
    <property type="entry name" value="ADENYLOSUCCINATE SYNTHETASE"/>
    <property type="match status" value="1"/>
</dbReference>
<dbReference type="PANTHER" id="PTHR11846:SF0">
    <property type="entry name" value="ADENYLOSUCCINATE SYNTHETASE"/>
    <property type="match status" value="1"/>
</dbReference>
<dbReference type="Pfam" id="PF00709">
    <property type="entry name" value="Adenylsucc_synt"/>
    <property type="match status" value="1"/>
</dbReference>
<dbReference type="SMART" id="SM00788">
    <property type="entry name" value="Adenylsucc_synt"/>
    <property type="match status" value="1"/>
</dbReference>
<dbReference type="SUPFAM" id="SSF52540">
    <property type="entry name" value="P-loop containing nucleoside triphosphate hydrolases"/>
    <property type="match status" value="1"/>
</dbReference>
<dbReference type="PROSITE" id="PS01266">
    <property type="entry name" value="ADENYLOSUCCIN_SYN_1"/>
    <property type="match status" value="1"/>
</dbReference>
<dbReference type="PROSITE" id="PS00513">
    <property type="entry name" value="ADENYLOSUCCIN_SYN_2"/>
    <property type="match status" value="1"/>
</dbReference>
<sequence>MTSVVVVGTQWGDEGKGKITDFLSADAEVIARYQGGDNAGHTIVIDGKKFKLHLIPSGIFFPEKVSVIGNGMVVNPKSLVEELDYLHQEGVATDNLRISDRAHIILPYHIKLDQLQEASKGDNKIGTTNKGIGPAYMDKAARVGIRIADLLDKDIFAERLKANLAEKNRLFEKMYESSPVAFDTIFDEYYAYGQKIKDYVTDTSVILNKALDKGRRVLFEGAQGVMLDIDQGTYPFVTSSNPVAGGVTIGSGVGPSKINKVVGVCKAYTSRVGDGPFPTELFDQTGERIREVGHEYGTTTGRPRRVGWFDSVVMRHSRRVSGITNLSLNCIDVLSGLDIVKICVAYDLDGKRIDHYPASLEQLKRCKPIYEELPGWSEDITGVRSLEDLPENARNYVRRVSELVGVRISTFSVGPDRDQTNILESVWGL</sequence>
<reference key="1">
    <citation type="journal article" date="2002" name="Proc. Natl. Acad. Sci. U.S.A.">
        <title>Genome sequence of Streptococcus mutans UA159, a cariogenic dental pathogen.</title>
        <authorList>
            <person name="Ajdic D.J."/>
            <person name="McShan W.M."/>
            <person name="McLaughlin R.E."/>
            <person name="Savic G."/>
            <person name="Chang J."/>
            <person name="Carson M.B."/>
            <person name="Primeaux C."/>
            <person name="Tian R."/>
            <person name="Kenton S."/>
            <person name="Jia H.G."/>
            <person name="Lin S.P."/>
            <person name="Qian Y."/>
            <person name="Li S."/>
            <person name="Zhu H."/>
            <person name="Najar F.Z."/>
            <person name="Lai H."/>
            <person name="White J."/>
            <person name="Roe B.A."/>
            <person name="Ferretti J.J."/>
        </authorList>
    </citation>
    <scope>NUCLEOTIDE SEQUENCE [LARGE SCALE GENOMIC DNA]</scope>
    <source>
        <strain>ATCC 700610 / UA159</strain>
    </source>
</reference>
<organism>
    <name type="scientific">Streptococcus mutans serotype c (strain ATCC 700610 / UA159)</name>
    <dbReference type="NCBI Taxonomy" id="210007"/>
    <lineage>
        <taxon>Bacteria</taxon>
        <taxon>Bacillati</taxon>
        <taxon>Bacillota</taxon>
        <taxon>Bacilli</taxon>
        <taxon>Lactobacillales</taxon>
        <taxon>Streptococcaceae</taxon>
        <taxon>Streptococcus</taxon>
    </lineage>
</organism>
<protein>
    <recommendedName>
        <fullName evidence="1">Adenylosuccinate synthetase</fullName>
        <shortName evidence="1">AMPSase</shortName>
        <shortName evidence="1">AdSS</shortName>
        <ecNumber evidence="1">6.3.4.4</ecNumber>
    </recommendedName>
    <alternativeName>
        <fullName evidence="1">IMP--aspartate ligase</fullName>
    </alternativeName>
</protein>
<feature type="chain" id="PRO_0000095238" description="Adenylosuccinate synthetase">
    <location>
        <begin position="1"/>
        <end position="429"/>
    </location>
</feature>
<feature type="active site" description="Proton acceptor" evidence="1">
    <location>
        <position position="13"/>
    </location>
</feature>
<feature type="active site" description="Proton donor" evidence="1">
    <location>
        <position position="41"/>
    </location>
</feature>
<feature type="binding site" evidence="1">
    <location>
        <begin position="12"/>
        <end position="18"/>
    </location>
    <ligand>
        <name>GTP</name>
        <dbReference type="ChEBI" id="CHEBI:37565"/>
    </ligand>
</feature>
<feature type="binding site" description="in other chain" evidence="1">
    <location>
        <begin position="13"/>
        <end position="16"/>
    </location>
    <ligand>
        <name>IMP</name>
        <dbReference type="ChEBI" id="CHEBI:58053"/>
        <note>ligand shared between dimeric partners</note>
    </ligand>
</feature>
<feature type="binding site" evidence="1">
    <location>
        <position position="13"/>
    </location>
    <ligand>
        <name>Mg(2+)</name>
        <dbReference type="ChEBI" id="CHEBI:18420"/>
    </ligand>
</feature>
<feature type="binding site" description="in other chain" evidence="1">
    <location>
        <begin position="38"/>
        <end position="41"/>
    </location>
    <ligand>
        <name>IMP</name>
        <dbReference type="ChEBI" id="CHEBI:58053"/>
        <note>ligand shared between dimeric partners</note>
    </ligand>
</feature>
<feature type="binding site" evidence="1">
    <location>
        <begin position="40"/>
        <end position="42"/>
    </location>
    <ligand>
        <name>GTP</name>
        <dbReference type="ChEBI" id="CHEBI:37565"/>
    </ligand>
</feature>
<feature type="binding site" evidence="1">
    <location>
        <position position="40"/>
    </location>
    <ligand>
        <name>Mg(2+)</name>
        <dbReference type="ChEBI" id="CHEBI:18420"/>
    </ligand>
</feature>
<feature type="binding site" description="in other chain" evidence="1">
    <location>
        <position position="128"/>
    </location>
    <ligand>
        <name>IMP</name>
        <dbReference type="ChEBI" id="CHEBI:58053"/>
        <note>ligand shared between dimeric partners</note>
    </ligand>
</feature>
<feature type="binding site" evidence="1">
    <location>
        <position position="142"/>
    </location>
    <ligand>
        <name>IMP</name>
        <dbReference type="ChEBI" id="CHEBI:58053"/>
        <note>ligand shared between dimeric partners</note>
    </ligand>
</feature>
<feature type="binding site" description="in other chain" evidence="1">
    <location>
        <position position="223"/>
    </location>
    <ligand>
        <name>IMP</name>
        <dbReference type="ChEBI" id="CHEBI:58053"/>
        <note>ligand shared between dimeric partners</note>
    </ligand>
</feature>
<feature type="binding site" description="in other chain" evidence="1">
    <location>
        <position position="238"/>
    </location>
    <ligand>
        <name>IMP</name>
        <dbReference type="ChEBI" id="CHEBI:58053"/>
        <note>ligand shared between dimeric partners</note>
    </ligand>
</feature>
<feature type="binding site" evidence="1">
    <location>
        <begin position="298"/>
        <end position="304"/>
    </location>
    <ligand>
        <name>substrate</name>
    </ligand>
</feature>
<feature type="binding site" description="in other chain" evidence="1">
    <location>
        <position position="302"/>
    </location>
    <ligand>
        <name>IMP</name>
        <dbReference type="ChEBI" id="CHEBI:58053"/>
        <note>ligand shared between dimeric partners</note>
    </ligand>
</feature>
<feature type="binding site" evidence="1">
    <location>
        <position position="304"/>
    </location>
    <ligand>
        <name>GTP</name>
        <dbReference type="ChEBI" id="CHEBI:37565"/>
    </ligand>
</feature>
<feature type="binding site" evidence="1">
    <location>
        <begin position="330"/>
        <end position="332"/>
    </location>
    <ligand>
        <name>GTP</name>
        <dbReference type="ChEBI" id="CHEBI:37565"/>
    </ligand>
</feature>
<feature type="binding site" evidence="1">
    <location>
        <begin position="412"/>
        <end position="414"/>
    </location>
    <ligand>
        <name>GTP</name>
        <dbReference type="ChEBI" id="CHEBI:37565"/>
    </ligand>
</feature>
<keyword id="KW-0963">Cytoplasm</keyword>
<keyword id="KW-0342">GTP-binding</keyword>
<keyword id="KW-0436">Ligase</keyword>
<keyword id="KW-0460">Magnesium</keyword>
<keyword id="KW-0479">Metal-binding</keyword>
<keyword id="KW-0547">Nucleotide-binding</keyword>
<keyword id="KW-0658">Purine biosynthesis</keyword>
<keyword id="KW-1185">Reference proteome</keyword>